<organism>
    <name type="scientific">Lactobacillus delbrueckii subsp. bulgaricus (strain ATCC 11842 / DSM 20081 / BCRC 10696 / JCM 1002 / NBRC 13953 / NCIMB 11778 / NCTC 12712 / WDCM 00102 / Lb 14)</name>
    <dbReference type="NCBI Taxonomy" id="390333"/>
    <lineage>
        <taxon>Bacteria</taxon>
        <taxon>Bacillati</taxon>
        <taxon>Bacillota</taxon>
        <taxon>Bacilli</taxon>
        <taxon>Lactobacillales</taxon>
        <taxon>Lactobacillaceae</taxon>
        <taxon>Lactobacillus</taxon>
    </lineage>
</organism>
<reference key="1">
    <citation type="journal article" date="2006" name="Proc. Natl. Acad. Sci. U.S.A.">
        <title>The complete genome sequence of Lactobacillus bulgaricus reveals extensive and ongoing reductive evolution.</title>
        <authorList>
            <person name="van de Guchte M."/>
            <person name="Penaud S."/>
            <person name="Grimaldi C."/>
            <person name="Barbe V."/>
            <person name="Bryson K."/>
            <person name="Nicolas P."/>
            <person name="Robert C."/>
            <person name="Oztas S."/>
            <person name="Mangenot S."/>
            <person name="Couloux A."/>
            <person name="Loux V."/>
            <person name="Dervyn R."/>
            <person name="Bossy R."/>
            <person name="Bolotin A."/>
            <person name="Batto J.-M."/>
            <person name="Walunas T."/>
            <person name="Gibrat J.-F."/>
            <person name="Bessieres P."/>
            <person name="Weissenbach J."/>
            <person name="Ehrlich S.D."/>
            <person name="Maguin E."/>
        </authorList>
    </citation>
    <scope>NUCLEOTIDE SEQUENCE [LARGE SCALE GENOMIC DNA]</scope>
    <source>
        <strain>ATCC 11842 / DSM 20081 / BCRC 10696 / JCM 1002 / NBRC 13953 / NCIMB 11778 / NCTC 12712 / WDCM 00102 / Lb 14</strain>
    </source>
</reference>
<evidence type="ECO:0000255" key="1">
    <source>
        <dbReference type="HAMAP-Rule" id="MF_00050"/>
    </source>
</evidence>
<accession>Q1G9N7</accession>
<protein>
    <recommendedName>
        <fullName evidence="1">Elongation factor Ts</fullName>
        <shortName evidence="1">EF-Ts</shortName>
    </recommendedName>
</protein>
<sequence length="342" mass="37427">MANITAKQVKELRETTGAGVMDAKKALVEAEGDMQRAIEIIHEKGEAKAAKKANRIAAEGLTGVYVDGNVAAIVEVNAETDFVAQNEQFKTLVNETAETIAKGKPANNEEALALTMPSGESLEEAYVNATATIGEKISFRRFAVLEKTDDQHFGAYQHNGGHIGVLTVVEGGDEALAKHIAMHIAAMSPKVLSYKELDPAFVREELAQLNHKIDQDNESRAMVNKPALPHLKYGSKAQLTDEVIAQAEEDIKAELKAEGKPEKIWDKIIPGKMARFMLDNTKVDQENTLLAQLYVMDDSKTVEQYLESVNASVVSFVRFEVGEGIEKKQEDFAAEVAAQMKN</sequence>
<feature type="chain" id="PRO_1000006112" description="Elongation factor Ts">
    <location>
        <begin position="1"/>
        <end position="342"/>
    </location>
</feature>
<feature type="region of interest" description="Involved in Mg(2+) ion dislocation from EF-Tu" evidence="1">
    <location>
        <begin position="80"/>
        <end position="83"/>
    </location>
</feature>
<gene>
    <name evidence="1" type="primary">tsf</name>
    <name type="ordered locus">Ldb1344</name>
</gene>
<proteinExistence type="inferred from homology"/>
<comment type="function">
    <text evidence="1">Associates with the EF-Tu.GDP complex and induces the exchange of GDP to GTP. It remains bound to the aminoacyl-tRNA.EF-Tu.GTP complex up to the GTP hydrolysis stage on the ribosome.</text>
</comment>
<comment type="subcellular location">
    <subcellularLocation>
        <location evidence="1">Cytoplasm</location>
    </subcellularLocation>
</comment>
<comment type="similarity">
    <text evidence="1">Belongs to the EF-Ts family.</text>
</comment>
<name>EFTS_LACDA</name>
<dbReference type="EMBL" id="CR954253">
    <property type="protein sequence ID" value="CAI98145.1"/>
    <property type="molecule type" value="Genomic_DNA"/>
</dbReference>
<dbReference type="RefSeq" id="WP_004560782.1">
    <property type="nucleotide sequence ID" value="NZ_JQAV01000006.1"/>
</dbReference>
<dbReference type="SMR" id="Q1G9N7"/>
<dbReference type="STRING" id="390333.Ldb1344"/>
<dbReference type="KEGG" id="ldb:Ldb1344"/>
<dbReference type="PATRIC" id="fig|390333.13.peg.1711"/>
<dbReference type="eggNOG" id="COG0264">
    <property type="taxonomic scope" value="Bacteria"/>
</dbReference>
<dbReference type="HOGENOM" id="CLU_047155_0_1_9"/>
<dbReference type="BioCyc" id="LDEL390333:LDB_RS05755-MONOMER"/>
<dbReference type="Proteomes" id="UP000001259">
    <property type="component" value="Chromosome"/>
</dbReference>
<dbReference type="GO" id="GO:0005737">
    <property type="term" value="C:cytoplasm"/>
    <property type="evidence" value="ECO:0007669"/>
    <property type="project" value="UniProtKB-SubCell"/>
</dbReference>
<dbReference type="GO" id="GO:0003746">
    <property type="term" value="F:translation elongation factor activity"/>
    <property type="evidence" value="ECO:0007669"/>
    <property type="project" value="UniProtKB-UniRule"/>
</dbReference>
<dbReference type="CDD" id="cd14275">
    <property type="entry name" value="UBA_EF-Ts"/>
    <property type="match status" value="1"/>
</dbReference>
<dbReference type="FunFam" id="1.10.286.20:FF:000004">
    <property type="entry name" value="Elongation factor Ts"/>
    <property type="match status" value="1"/>
</dbReference>
<dbReference type="FunFam" id="1.10.8.10:FF:000001">
    <property type="entry name" value="Elongation factor Ts"/>
    <property type="match status" value="1"/>
</dbReference>
<dbReference type="Gene3D" id="1.10.286.20">
    <property type="match status" value="1"/>
</dbReference>
<dbReference type="Gene3D" id="1.10.8.10">
    <property type="entry name" value="DNA helicase RuvA subunit, C-terminal domain"/>
    <property type="match status" value="1"/>
</dbReference>
<dbReference type="Gene3D" id="3.30.479.20">
    <property type="entry name" value="Elongation factor Ts, dimerisation domain"/>
    <property type="match status" value="2"/>
</dbReference>
<dbReference type="HAMAP" id="MF_00050">
    <property type="entry name" value="EF_Ts"/>
    <property type="match status" value="1"/>
</dbReference>
<dbReference type="InterPro" id="IPR036402">
    <property type="entry name" value="EF-Ts_dimer_sf"/>
</dbReference>
<dbReference type="InterPro" id="IPR001816">
    <property type="entry name" value="Transl_elong_EFTs/EF1B"/>
</dbReference>
<dbReference type="InterPro" id="IPR014039">
    <property type="entry name" value="Transl_elong_EFTs/EF1B_dimer"/>
</dbReference>
<dbReference type="InterPro" id="IPR018101">
    <property type="entry name" value="Transl_elong_Ts_CS"/>
</dbReference>
<dbReference type="InterPro" id="IPR009060">
    <property type="entry name" value="UBA-like_sf"/>
</dbReference>
<dbReference type="NCBIfam" id="TIGR00116">
    <property type="entry name" value="tsf"/>
    <property type="match status" value="1"/>
</dbReference>
<dbReference type="PANTHER" id="PTHR11741">
    <property type="entry name" value="ELONGATION FACTOR TS"/>
    <property type="match status" value="1"/>
</dbReference>
<dbReference type="PANTHER" id="PTHR11741:SF0">
    <property type="entry name" value="ELONGATION FACTOR TS, MITOCHONDRIAL"/>
    <property type="match status" value="1"/>
</dbReference>
<dbReference type="Pfam" id="PF00889">
    <property type="entry name" value="EF_TS"/>
    <property type="match status" value="1"/>
</dbReference>
<dbReference type="SUPFAM" id="SSF54713">
    <property type="entry name" value="Elongation factor Ts (EF-Ts), dimerisation domain"/>
    <property type="match status" value="1"/>
</dbReference>
<dbReference type="SUPFAM" id="SSF46934">
    <property type="entry name" value="UBA-like"/>
    <property type="match status" value="1"/>
</dbReference>
<dbReference type="PROSITE" id="PS01126">
    <property type="entry name" value="EF_TS_1"/>
    <property type="match status" value="1"/>
</dbReference>
<dbReference type="PROSITE" id="PS01127">
    <property type="entry name" value="EF_TS_2"/>
    <property type="match status" value="1"/>
</dbReference>
<keyword id="KW-0963">Cytoplasm</keyword>
<keyword id="KW-0251">Elongation factor</keyword>
<keyword id="KW-0648">Protein biosynthesis</keyword>
<keyword id="KW-1185">Reference proteome</keyword>